<sequence>MYGIEYTTVLFYLISFILVSYILKTITKIMDYLIYRITFIIVVLSMLSNAQNYGINLPITGSMDIAYANSTQNDNFLSSTLCLYYPTEASTQISDNEWKDTLSQLFLTKGWPTGSVYFNEYSNVLEFSIDPKLYCDYNIVLIRFTSGEELDISELADLILNEWLCNPMDITLYYYQQTGEANKWISMGSSCTVKVCPLNTQTLGIGCQTTNATTFETVADREKLAIVDVVDGVNHKLDVTSTTCTIRNCNKLGPRENVAIIQVGGSNILDITADPTTSPQTERMMRVNWKKWWQVFYTVVDYINQIVQVMSKRSRSLDSSSFYYRV</sequence>
<dbReference type="EMBL" id="X58439">
    <property type="protein sequence ID" value="CAA41345.1"/>
    <property type="molecule type" value="mRNA"/>
</dbReference>
<dbReference type="SMR" id="P27423"/>
<dbReference type="GO" id="GO:0044166">
    <property type="term" value="C:host cell endoplasmic reticulum lumen"/>
    <property type="evidence" value="ECO:0007669"/>
    <property type="project" value="UniProtKB-SubCell"/>
</dbReference>
<dbReference type="GO" id="GO:0039621">
    <property type="term" value="C:T=13 icosahedral viral capsid"/>
    <property type="evidence" value="ECO:0007669"/>
    <property type="project" value="UniProtKB-UniRule"/>
</dbReference>
<dbReference type="GO" id="GO:0039624">
    <property type="term" value="C:viral outer capsid"/>
    <property type="evidence" value="ECO:0007669"/>
    <property type="project" value="UniProtKB-UniRule"/>
</dbReference>
<dbReference type="GO" id="GO:0046872">
    <property type="term" value="F:metal ion binding"/>
    <property type="evidence" value="ECO:0007669"/>
    <property type="project" value="UniProtKB-KW"/>
</dbReference>
<dbReference type="Gene3D" id="3.40.50.11130">
    <property type="entry name" value="Glycoprotein VP7, domain 1"/>
    <property type="match status" value="1"/>
</dbReference>
<dbReference type="Gene3D" id="2.60.120.800">
    <property type="entry name" value="Rotavirus outer-layer protein VP7, domain 2"/>
    <property type="match status" value="1"/>
</dbReference>
<dbReference type="HAMAP" id="MF_04130">
    <property type="entry name" value="Rota_VP7"/>
    <property type="match status" value="1"/>
</dbReference>
<dbReference type="HAMAP" id="MF_04131">
    <property type="entry name" value="Rota_VP7_A"/>
    <property type="match status" value="1"/>
</dbReference>
<dbReference type="InterPro" id="IPR001963">
    <property type="entry name" value="VP7"/>
</dbReference>
<dbReference type="InterPro" id="IPR042207">
    <property type="entry name" value="VP7_1"/>
</dbReference>
<dbReference type="InterPro" id="IPR042210">
    <property type="entry name" value="VP7_2"/>
</dbReference>
<dbReference type="Pfam" id="PF00434">
    <property type="entry name" value="VP7"/>
    <property type="match status" value="1"/>
</dbReference>
<accession>P27423</accession>
<organismHost>
    <name type="scientific">Sus scrofa</name>
    <name type="common">Pig</name>
    <dbReference type="NCBI Taxonomy" id="9823"/>
</organismHost>
<organism>
    <name type="scientific">Rotavirus A (strain RVA/Pig/Russia/K/1987)</name>
    <name type="common">RV-A</name>
    <dbReference type="NCBI Taxonomy" id="10918"/>
    <lineage>
        <taxon>Viruses</taxon>
        <taxon>Riboviria</taxon>
        <taxon>Orthornavirae</taxon>
        <taxon>Duplornaviricota</taxon>
        <taxon>Resentoviricetes</taxon>
        <taxon>Reovirales</taxon>
        <taxon>Sedoreoviridae</taxon>
        <taxon>Rotavirus</taxon>
        <taxon>Rotavirus A</taxon>
    </lineage>
</organism>
<proteinExistence type="evidence at transcript level"/>
<comment type="function">
    <text evidence="2">Calcium-binding protein that interacts with rotavirus cell receptors once the initial attachment by VP4 has been achieved. Rotavirus attachment and entry into the host cell probably involves multiple sequential contacts between the outer capsid proteins VP4 and VP7, and the cell receptors. Following entry into the host cell, low intracellular or intravesicular Ca(2+) concentration probably causes the calcium-stabilized VP7 trimers to dissociate from the virion. This step is probably necessary for the membrane-disrupting entry step and the release of VP4, which is locked onto the virion by VP7.</text>
</comment>
<comment type="subunit">
    <text evidence="2">Homotrimer; disulfide-linked. 2 Ca(2+) ions bound at each subunit interface in the trimer hold the trimer together. Interacts with the intermediate capsid protein VP6. Interacts with the outer capsid protein VP5*.</text>
</comment>
<comment type="subcellular location">
    <subcellularLocation>
        <location evidence="2">Virion</location>
    </subcellularLocation>
    <subcellularLocation>
        <location evidence="2">Host endoplasmic reticulum lumen</location>
    </subcellularLocation>
    <text evidence="2">The outer layer contains 780 copies of VP7, grouped as 260 trimers. Immature double-layered particles assembled in the cytoplasm bud across the membrane of the endoplasmic reticulum, acquiring during this process a transient lipid membrane that is modified with the ER resident viral glycoproteins NSP4 and VP7; these enveloped particles also contain VP4. As the particles move towards the interior of the ER cisternae, the transient lipid membrane and the non-structural protein NSP4 are lost, while the virus surface proteins VP4 and VP7 rearrange to form the outermost virus protein layer, yielding mature infectious triple-layered particles.</text>
</comment>
<comment type="alternative products">
    <event type="alternative initiation"/>
    <isoform>
        <id>P27423-1</id>
        <name>1</name>
        <sequence type="displayed"/>
    </isoform>
    <isoform>
        <id>P27423-2</id>
        <name>2</name>
        <sequence type="described" ref="VSP_038639"/>
    </isoform>
</comment>
<comment type="PTM">
    <text evidence="2">N-glycosylated.</text>
</comment>
<comment type="PTM">
    <text evidence="2">The N-terminus is blocked possibly by pyroglutamic acid.</text>
</comment>
<comment type="miscellaneous">
    <text evidence="2">Some rotavirus strains are neuraminidase-sensitive and require sialic acid to attach to the cell surface. Some rotavirus strains are integrin-dependent. Some rotavirus strains depend on ganglioside for their entry into the host cell. Hsp70 also seems to be involved in the entry of some strains.</text>
</comment>
<comment type="miscellaneous">
    <text evidence="2">In group A rotaviruses, VP7 defines the G serotype.</text>
</comment>
<comment type="miscellaneous">
    <molecule>Isoform 2</molecule>
    <text evidence="3">Produced by alternative initiation at Met-30 of isoform 1.</text>
</comment>
<comment type="similarity">
    <text evidence="2">Belongs to the rotavirus VP7 family.</text>
</comment>
<keyword id="KW-0024">Alternative initiation</keyword>
<keyword id="KW-0106">Calcium</keyword>
<keyword id="KW-0167">Capsid protein</keyword>
<keyword id="KW-1015">Disulfide bond</keyword>
<keyword id="KW-0325">Glycoprotein</keyword>
<keyword id="KW-1038">Host endoplasmic reticulum</keyword>
<keyword id="KW-0945">Host-virus interaction</keyword>
<keyword id="KW-0479">Metal-binding</keyword>
<keyword id="KW-1152">Outer capsid protein</keyword>
<keyword id="KW-0732">Signal</keyword>
<keyword id="KW-1146">T=13 icosahedral capsid protein</keyword>
<keyword id="KW-0946">Virion</keyword>
<name>VP7_ROTPK</name>
<protein>
    <recommendedName>
        <fullName evidence="2">Outer capsid glycoprotein VP7</fullName>
    </recommendedName>
</protein>
<feature type="signal peptide" evidence="2">
    <location>
        <begin position="1"/>
        <end position="50"/>
    </location>
</feature>
<feature type="chain" id="PRO_0000149618" description="Outer capsid glycoprotein VP7" evidence="2">
    <location>
        <begin position="51"/>
        <end position="326"/>
    </location>
</feature>
<feature type="region of interest" description="CNP motif; interaction with ITGAV/ITGB3" evidence="2">
    <location>
        <begin position="165"/>
        <end position="167"/>
    </location>
</feature>
<feature type="region of interest" description="LVD motif; interaction with ITGA4/ITGB1 heterodimer" evidence="2">
    <location>
        <begin position="237"/>
        <end position="239"/>
    </location>
</feature>
<feature type="region of interest" description="GPR motif; interaction with ITGAX/ITGB2" evidence="2">
    <location>
        <begin position="253"/>
        <end position="255"/>
    </location>
</feature>
<feature type="binding site" evidence="2">
    <location>
        <position position="95"/>
    </location>
    <ligand>
        <name>Ca(2+)</name>
        <dbReference type="ChEBI" id="CHEBI:29108"/>
        <label>1</label>
    </ligand>
</feature>
<feature type="binding site" evidence="2">
    <location>
        <position position="177"/>
    </location>
    <ligand>
        <name>Ca(2+)</name>
        <dbReference type="ChEBI" id="CHEBI:29108"/>
        <label>2</label>
    </ligand>
</feature>
<feature type="binding site" evidence="2">
    <location>
        <position position="206"/>
    </location>
    <ligand>
        <name>Ca(2+)</name>
        <dbReference type="ChEBI" id="CHEBI:29108"/>
        <label>1</label>
    </ligand>
</feature>
<feature type="binding site" evidence="2">
    <location>
        <position position="214"/>
    </location>
    <ligand>
        <name>Ca(2+)</name>
        <dbReference type="ChEBI" id="CHEBI:29108"/>
        <label>1</label>
    </ligand>
</feature>
<feature type="binding site" evidence="2">
    <location>
        <position position="216"/>
    </location>
    <ligand>
        <name>Ca(2+)</name>
        <dbReference type="ChEBI" id="CHEBI:29108"/>
        <label>1</label>
    </ligand>
</feature>
<feature type="binding site" evidence="2">
    <location>
        <position position="228"/>
    </location>
    <ligand>
        <name>Ca(2+)</name>
        <dbReference type="ChEBI" id="CHEBI:29108"/>
        <label>2</label>
    </ligand>
</feature>
<feature type="binding site" evidence="2">
    <location>
        <position position="229"/>
    </location>
    <ligand>
        <name>Ca(2+)</name>
        <dbReference type="ChEBI" id="CHEBI:29108"/>
        <label>2</label>
    </ligand>
</feature>
<feature type="binding site" evidence="2">
    <location>
        <position position="231"/>
    </location>
    <ligand>
        <name>Ca(2+)</name>
        <dbReference type="ChEBI" id="CHEBI:29108"/>
        <label>2</label>
    </ligand>
</feature>
<feature type="binding site" evidence="2">
    <location>
        <position position="301"/>
    </location>
    <ligand>
        <name>Ca(2+)</name>
        <dbReference type="ChEBI" id="CHEBI:29108"/>
        <label>2</label>
    </ligand>
</feature>
<feature type="glycosylation site" description="N-linked (GlcNAc...) asparagine; by host" evidence="1">
    <location>
        <position position="69"/>
    </location>
</feature>
<feature type="glycosylation site" description="N-linked (GlcNAc...) asparagine; by host" evidence="1">
    <location>
        <position position="211"/>
    </location>
</feature>
<feature type="disulfide bond" evidence="2">
    <location>
        <begin position="82"/>
        <end position="135"/>
    </location>
</feature>
<feature type="disulfide bond" evidence="2">
    <location>
        <begin position="165"/>
        <end position="249"/>
    </location>
</feature>
<feature type="disulfide bond" evidence="2">
    <location>
        <begin position="191"/>
        <end position="244"/>
    </location>
</feature>
<feature type="disulfide bond" evidence="2">
    <location>
        <begin position="196"/>
        <end position="207"/>
    </location>
</feature>
<feature type="splice variant" id="VSP_038639" description="In isoform 2." evidence="3">
    <location>
        <begin position="1"/>
        <end position="29"/>
    </location>
</feature>
<reference key="1">
    <citation type="journal article" date="1992" name="Virus Genes">
        <title>Nucleotide sequence of the cDNA for porcine rotavirus VP7 gene (strain K).</title>
        <authorList>
            <person name="Akopian T.A."/>
            <person name="Lunin V.G."/>
            <person name="Kruglyak V.A."/>
            <person name="Ruchadze G.G."/>
            <person name="Bakhutashvili V.I."/>
            <person name="Naroditsky B.S."/>
            <person name="Tikhonenko T.I."/>
        </authorList>
    </citation>
    <scope>NUCLEOTIDE SEQUENCE [MRNA]</scope>
</reference>
<evidence type="ECO:0000255" key="1"/>
<evidence type="ECO:0000255" key="2">
    <source>
        <dbReference type="HAMAP-Rule" id="MF_04131"/>
    </source>
</evidence>
<evidence type="ECO:0000305" key="3"/>